<comment type="function">
    <text>This protein plays a role in synthesis of starch. It catalyzes the synthesis of the activated glycosyl donor, ADP-glucose from Glc-1-P and ATP.</text>
</comment>
<comment type="catalytic activity">
    <reaction>
        <text>alpha-D-glucose 1-phosphate + ATP + H(+) = ADP-alpha-D-glucose + diphosphate</text>
        <dbReference type="Rhea" id="RHEA:12120"/>
        <dbReference type="ChEBI" id="CHEBI:15378"/>
        <dbReference type="ChEBI" id="CHEBI:30616"/>
        <dbReference type="ChEBI" id="CHEBI:33019"/>
        <dbReference type="ChEBI" id="CHEBI:57498"/>
        <dbReference type="ChEBI" id="CHEBI:58601"/>
        <dbReference type="EC" id="2.7.7.27"/>
    </reaction>
</comment>
<comment type="activity regulation">
    <text>Activated by 3'phosphoglycerate, inhibited by orthophosphate. Allosteric regulation.</text>
</comment>
<comment type="pathway">
    <text>Glycan biosynthesis; starch biosynthesis.</text>
</comment>
<comment type="subunit">
    <text>Heterotetramer.</text>
</comment>
<comment type="subcellular location">
    <subcellularLocation>
        <location evidence="1">Plastid</location>
        <location evidence="1">Chloroplast</location>
    </subcellularLocation>
</comment>
<comment type="tissue specificity">
    <text>Leaves and seeds.</text>
</comment>
<comment type="developmental stage">
    <text>It is present in young cotyledons at 14 days after fertilization (daf) when cells are still rapidly dividing. Levels steadily accumulate until the end of the cell expansion phase (35-40 daf) and with the beginning of the seeds desiccation phase at 50 daf, the levels decrease to very low levels.</text>
</comment>
<comment type="similarity">
    <text evidence="4">Belongs to the bacterial/plant glucose-1-phosphate adenylyltransferase family.</text>
</comment>
<protein>
    <recommendedName>
        <fullName>Glucose-1-phosphate adenylyltransferase small subunit 2, chloroplastic</fullName>
        <ecNumber>2.7.7.27</ecNumber>
    </recommendedName>
    <alternativeName>
        <fullName>ADP-glucose pyrophosphorylase</fullName>
    </alternativeName>
    <alternativeName>
        <fullName>ADP-glucose synthase</fullName>
    </alternativeName>
    <alternativeName>
        <fullName>AGPase B</fullName>
    </alternativeName>
    <alternativeName>
        <fullName>Alpha-D-glucose-1-phosphate adenyl transferase</fullName>
    </alternativeName>
</protein>
<accession>P52417</accession>
<keyword id="KW-0021">Allosteric enzyme</keyword>
<keyword id="KW-0067">ATP-binding</keyword>
<keyword id="KW-0150">Chloroplast</keyword>
<keyword id="KW-0547">Nucleotide-binding</keyword>
<keyword id="KW-0548">Nucleotidyltransferase</keyword>
<keyword id="KW-0934">Plastid</keyword>
<keyword id="KW-0750">Starch biosynthesis</keyword>
<keyword id="KW-0808">Transferase</keyword>
<keyword id="KW-0809">Transit peptide</keyword>
<gene>
    <name type="primary">AGPP</name>
</gene>
<feature type="transit peptide" description="Chloroplast" evidence="2">
    <location>
        <begin position="1"/>
        <end position="63"/>
    </location>
</feature>
<feature type="chain" id="PRO_0000011157" description="Glucose-1-phosphate adenylyltransferase small subunit 2, chloroplastic">
    <location>
        <begin position="64"/>
        <end position="512"/>
    </location>
</feature>
<feature type="region of interest" description="Disordered" evidence="3">
    <location>
        <begin position="1"/>
        <end position="21"/>
    </location>
</feature>
<feature type="compositionally biased region" description="Low complexity" evidence="3">
    <location>
        <begin position="12"/>
        <end position="21"/>
    </location>
</feature>
<name>GLGS2_VICFA</name>
<reference key="1">
    <citation type="journal article" date="1995" name="Planta">
        <title>Cell-type specific, coordinate expression of two ADP-glucose pyrophosphorylase genes in relation to starch biosynthesis during seed development of Vicia faba L.</title>
        <authorList>
            <person name="Weber H."/>
            <person name="Heim U."/>
            <person name="Borisjuk L."/>
            <person name="Wobus U."/>
        </authorList>
    </citation>
    <scope>NUCLEOTIDE SEQUENCE [MRNA]</scope>
    <source>
        <strain>cv. Fribo</strain>
        <tissue>Cotyledon</tissue>
    </source>
</reference>
<proteinExistence type="evidence at transcript level"/>
<sequence length="512" mass="56060">MAAIGVLKVPPSSSSSSSSSSSKAIARNLSFTSSHLSGDKIFTLSGRTRRTSGRNPFIVSPKAVSDSKNSQTCLDPDASRSVLGIILGGGAGTRLYPLTKKRAKPAVPLGANYRLIDIPVSNCLNSNISKIYVLTQFNSASLNRHLSRAYASNLGGYKNEGFVEVLAAQQSPENPNWFQGTADAVRQYLWLFEEHNVLEYLVLAGDHLYRMDYERFIQAHRESDADITVAALPMDEARATAFGLMKIDEEGRIIEFSENPKGEQLKAMKVDTTILGLDDDRAKEMPYIASMGIYVVSKHVMLDLLRDKFPGANDFGSEVIPGATELGMRVQAYLYDGYWEDIGTIEAFYNANLGITKKPVPDFSFYDRSSPIYTQPRYLPPSKMLDADITDSVIGEGCVIKNCKIHHSVVGLRSCISEGAIIEDTLLMGADYYETDADRRFLAAKGGVPIGIGKNSHIRRAIIDKNARIGDDVKIINSDNVQEAARETEGYFIKSGIVTVIKDALIPSGTVI</sequence>
<organism>
    <name type="scientific">Vicia faba</name>
    <name type="common">Broad bean</name>
    <name type="synonym">Faba vulgaris</name>
    <dbReference type="NCBI Taxonomy" id="3906"/>
    <lineage>
        <taxon>Eukaryota</taxon>
        <taxon>Viridiplantae</taxon>
        <taxon>Streptophyta</taxon>
        <taxon>Embryophyta</taxon>
        <taxon>Tracheophyta</taxon>
        <taxon>Spermatophyta</taxon>
        <taxon>Magnoliopsida</taxon>
        <taxon>eudicotyledons</taxon>
        <taxon>Gunneridae</taxon>
        <taxon>Pentapetalae</taxon>
        <taxon>rosids</taxon>
        <taxon>fabids</taxon>
        <taxon>Fabales</taxon>
        <taxon>Fabaceae</taxon>
        <taxon>Papilionoideae</taxon>
        <taxon>50 kb inversion clade</taxon>
        <taxon>NPAAA clade</taxon>
        <taxon>Hologalegina</taxon>
        <taxon>IRL clade</taxon>
        <taxon>Fabeae</taxon>
        <taxon>Vicia</taxon>
    </lineage>
</organism>
<evidence type="ECO:0000250" key="1"/>
<evidence type="ECO:0000255" key="2"/>
<evidence type="ECO:0000256" key="3">
    <source>
        <dbReference type="SAM" id="MobiDB-lite"/>
    </source>
</evidence>
<evidence type="ECO:0000305" key="4"/>
<dbReference type="EC" id="2.7.7.27"/>
<dbReference type="EMBL" id="X76941">
    <property type="protein sequence ID" value="CAA54260.1"/>
    <property type="molecule type" value="mRNA"/>
</dbReference>
<dbReference type="PIR" id="S41292">
    <property type="entry name" value="S41292"/>
</dbReference>
<dbReference type="SMR" id="P52417"/>
<dbReference type="BRENDA" id="2.7.7.27">
    <property type="organism ID" value="986"/>
</dbReference>
<dbReference type="UniPathway" id="UPA00152"/>
<dbReference type="GO" id="GO:0009507">
    <property type="term" value="C:chloroplast"/>
    <property type="evidence" value="ECO:0007669"/>
    <property type="project" value="UniProtKB-SubCell"/>
</dbReference>
<dbReference type="GO" id="GO:0005524">
    <property type="term" value="F:ATP binding"/>
    <property type="evidence" value="ECO:0007669"/>
    <property type="project" value="UniProtKB-KW"/>
</dbReference>
<dbReference type="GO" id="GO:0008878">
    <property type="term" value="F:glucose-1-phosphate adenylyltransferase activity"/>
    <property type="evidence" value="ECO:0007669"/>
    <property type="project" value="UniProtKB-EC"/>
</dbReference>
<dbReference type="GO" id="GO:0005978">
    <property type="term" value="P:glycogen biosynthetic process"/>
    <property type="evidence" value="ECO:0007669"/>
    <property type="project" value="InterPro"/>
</dbReference>
<dbReference type="GO" id="GO:0019252">
    <property type="term" value="P:starch biosynthetic process"/>
    <property type="evidence" value="ECO:0007669"/>
    <property type="project" value="UniProtKB-UniPathway"/>
</dbReference>
<dbReference type="CDD" id="cd02508">
    <property type="entry name" value="ADP_Glucose_PP"/>
    <property type="match status" value="1"/>
</dbReference>
<dbReference type="CDD" id="cd04651">
    <property type="entry name" value="LbH_G1P_AT_C"/>
    <property type="match status" value="1"/>
</dbReference>
<dbReference type="FunFam" id="2.160.10.10:FF:000010">
    <property type="entry name" value="Glucose-1-phosphate adenylyltransferase"/>
    <property type="match status" value="1"/>
</dbReference>
<dbReference type="FunFam" id="3.90.550.10:FF:000030">
    <property type="entry name" value="Glucose-1-phosphate adenylyltransferase"/>
    <property type="match status" value="1"/>
</dbReference>
<dbReference type="Gene3D" id="2.160.10.10">
    <property type="entry name" value="Hexapeptide repeat proteins"/>
    <property type="match status" value="1"/>
</dbReference>
<dbReference type="Gene3D" id="3.90.550.10">
    <property type="entry name" value="Spore Coat Polysaccharide Biosynthesis Protein SpsA, Chain A"/>
    <property type="match status" value="1"/>
</dbReference>
<dbReference type="InterPro" id="IPR011831">
    <property type="entry name" value="ADP-Glc_PPase"/>
</dbReference>
<dbReference type="InterPro" id="IPR005836">
    <property type="entry name" value="ADP_Glu_pyroP_CS"/>
</dbReference>
<dbReference type="InterPro" id="IPR005835">
    <property type="entry name" value="NTP_transferase_dom"/>
</dbReference>
<dbReference type="InterPro" id="IPR029044">
    <property type="entry name" value="Nucleotide-diphossugar_trans"/>
</dbReference>
<dbReference type="InterPro" id="IPR011004">
    <property type="entry name" value="Trimer_LpxA-like_sf"/>
</dbReference>
<dbReference type="NCBIfam" id="TIGR02091">
    <property type="entry name" value="glgC"/>
    <property type="match status" value="1"/>
</dbReference>
<dbReference type="NCBIfam" id="NF002772">
    <property type="entry name" value="PRK02862.1"/>
    <property type="match status" value="1"/>
</dbReference>
<dbReference type="PANTHER" id="PTHR43523:SF12">
    <property type="entry name" value="GLUCOSE-1-PHOSPHATE ADENYLYLTRANSFERASE LARGE SUBUNIT 1, CHLOROPLASTIC-RELATED"/>
    <property type="match status" value="1"/>
</dbReference>
<dbReference type="PANTHER" id="PTHR43523">
    <property type="entry name" value="GLUCOSE-1-PHOSPHATE ADENYLYLTRANSFERASE-RELATED"/>
    <property type="match status" value="1"/>
</dbReference>
<dbReference type="Pfam" id="PF25247">
    <property type="entry name" value="LbH_GLGC"/>
    <property type="match status" value="1"/>
</dbReference>
<dbReference type="Pfam" id="PF00483">
    <property type="entry name" value="NTP_transferase"/>
    <property type="match status" value="1"/>
</dbReference>
<dbReference type="SUPFAM" id="SSF53448">
    <property type="entry name" value="Nucleotide-diphospho-sugar transferases"/>
    <property type="match status" value="1"/>
</dbReference>
<dbReference type="SUPFAM" id="SSF51161">
    <property type="entry name" value="Trimeric LpxA-like enzymes"/>
    <property type="match status" value="1"/>
</dbReference>
<dbReference type="PROSITE" id="PS00808">
    <property type="entry name" value="ADP_GLC_PYROPHOSPH_1"/>
    <property type="match status" value="1"/>
</dbReference>
<dbReference type="PROSITE" id="PS00809">
    <property type="entry name" value="ADP_GLC_PYROPHOSPH_2"/>
    <property type="match status" value="1"/>
</dbReference>
<dbReference type="PROSITE" id="PS00810">
    <property type="entry name" value="ADP_GLC_PYROPHOSPH_3"/>
    <property type="match status" value="1"/>
</dbReference>